<accession>Q17FB8</accession>
<sequence>MKPVSCVGLLVLLVGVLVTVKGSILFQSPKVLIVSLIRNKEHTLPYFFSYLEDQEYPKDRISLWFRSDHNEDRSIDIIKAWLKRVTKKYHSVDFGYRSDAAKRYDEKSSTHWSEDRFADVIRLKQEALDKGRKMWADFVLFLDADVLLTNPNTIAKLVSLNLPIVAPMLLSDGLYSNFWCGMTADYYYHRTDEYKEILNYEKTGEFPVPMVHSAVMVNINVQQSLNLSFDKRRLPPGHYTGPVDDIIIFAMSANYSSIPMYISNSASYGYILVPLEQGDPLEKDLEQLTNTKVYIINEHGAINLKEDLKHFVPKVPKDKMGVSHIYMINLERRPERRNKMFNNFDELGLDVEFFPAVDGRQLSDDKLRDIGVKFLPGYADPYHKRPMTMGEIGCFLSHYYIWEKMVAMNQEEVLVLEDDIRFEPYFKRRVAQVLDDARRIGGWDLIYFGRKRLQEDDEKWVVGSETLVVAGYSYWTLGYLISLQGAKKLLEEKPLEKLVPVDEYIPIMFNNHPNESWVNHFKNRNLVAWSAAPLLLYPTHYTGDDGYISDTEDSARIDNFNKVLNDTSDSSAEKKGDKEQLSSKTLMDSTISRDEHELSVANRKSEL</sequence>
<dbReference type="EC" id="2.-.-.-"/>
<dbReference type="EMBL" id="CH477272">
    <property type="protein sequence ID" value="EAT45228.1"/>
    <property type="molecule type" value="Genomic_DNA"/>
</dbReference>
<dbReference type="SMR" id="Q17FB8"/>
<dbReference type="FunCoup" id="Q17FB8">
    <property type="interactions" value="366"/>
</dbReference>
<dbReference type="STRING" id="7159.Q17FB8"/>
<dbReference type="PaxDb" id="7159-AAEL003481-PA"/>
<dbReference type="EnsemblMetazoa" id="AAEL003481-RA">
    <property type="protein sequence ID" value="AAEL003481-PA"/>
    <property type="gene ID" value="AAEL003481"/>
</dbReference>
<dbReference type="GeneID" id="5578193"/>
<dbReference type="KEGG" id="aag:5578193"/>
<dbReference type="VEuPathDB" id="VectorBase:AAEL003481"/>
<dbReference type="eggNOG" id="KOG4179">
    <property type="taxonomic scope" value="Eukaryota"/>
</dbReference>
<dbReference type="HOGENOM" id="CLU_024037_2_0_1"/>
<dbReference type="InParanoid" id="Q17FB8"/>
<dbReference type="OMA" id="QRVYHYV"/>
<dbReference type="OrthoDB" id="47375at2759"/>
<dbReference type="PhylomeDB" id="Q17FB8"/>
<dbReference type="Proteomes" id="UP000008820">
    <property type="component" value="Chromosome 3"/>
</dbReference>
<dbReference type="Proteomes" id="UP000682892">
    <property type="component" value="Unassembled WGS sequence"/>
</dbReference>
<dbReference type="GO" id="GO:0005788">
    <property type="term" value="C:endoplasmic reticulum lumen"/>
    <property type="evidence" value="ECO:0007669"/>
    <property type="project" value="UniProtKB-SubCell"/>
</dbReference>
<dbReference type="GO" id="GO:0050211">
    <property type="term" value="F:procollagen galactosyltransferase activity"/>
    <property type="evidence" value="ECO:0007669"/>
    <property type="project" value="TreeGrafter"/>
</dbReference>
<dbReference type="CDD" id="cd06532">
    <property type="entry name" value="Glyco_transf_25"/>
    <property type="match status" value="1"/>
</dbReference>
<dbReference type="Gene3D" id="3.90.550.10">
    <property type="entry name" value="Spore Coat Polysaccharide Biosynthesis Protein SpsA, Chain A"/>
    <property type="match status" value="1"/>
</dbReference>
<dbReference type="InterPro" id="IPR050757">
    <property type="entry name" value="Collagen_mod_GT25"/>
</dbReference>
<dbReference type="InterPro" id="IPR002654">
    <property type="entry name" value="Glyco_trans_25"/>
</dbReference>
<dbReference type="InterPro" id="IPR029044">
    <property type="entry name" value="Nucleotide-diphossugar_trans"/>
</dbReference>
<dbReference type="PANTHER" id="PTHR10730:SF53">
    <property type="entry name" value="GLYCOSYLTRANSFERASE 25 FAMILY MEMBER"/>
    <property type="match status" value="1"/>
</dbReference>
<dbReference type="PANTHER" id="PTHR10730">
    <property type="entry name" value="PROCOLLAGEN-LYSINE,2-OXOGLUTARATE 5-DIOXYGENASE/GLYCOSYLTRANSFERASE 25 FAMILY MEMBER"/>
    <property type="match status" value="1"/>
</dbReference>
<dbReference type="Pfam" id="PF03452">
    <property type="entry name" value="Anp1"/>
    <property type="match status" value="1"/>
</dbReference>
<dbReference type="Pfam" id="PF01755">
    <property type="entry name" value="Glyco_transf_25"/>
    <property type="match status" value="1"/>
</dbReference>
<dbReference type="SUPFAM" id="SSF53448">
    <property type="entry name" value="Nucleotide-diphospho-sugar transferases"/>
    <property type="match status" value="1"/>
</dbReference>
<reference key="1">
    <citation type="journal article" date="2007" name="Science">
        <title>Genome sequence of Aedes aegypti, a major arbovirus vector.</title>
        <authorList>
            <person name="Nene V."/>
            <person name="Wortman J.R."/>
            <person name="Lawson D."/>
            <person name="Haas B.J."/>
            <person name="Kodira C.D."/>
            <person name="Tu Z.J."/>
            <person name="Loftus B.J."/>
            <person name="Xi Z."/>
            <person name="Megy K."/>
            <person name="Grabherr M."/>
            <person name="Ren Q."/>
            <person name="Zdobnov E.M."/>
            <person name="Lobo N.F."/>
            <person name="Campbell K.S."/>
            <person name="Brown S.E."/>
            <person name="Bonaldo M.F."/>
            <person name="Zhu J."/>
            <person name="Sinkins S.P."/>
            <person name="Hogenkamp D.G."/>
            <person name="Amedeo P."/>
            <person name="Arensburger P."/>
            <person name="Atkinson P.W."/>
            <person name="Bidwell S.L."/>
            <person name="Biedler J."/>
            <person name="Birney E."/>
            <person name="Bruggner R.V."/>
            <person name="Costas J."/>
            <person name="Coy M.R."/>
            <person name="Crabtree J."/>
            <person name="Crawford M."/>
            <person name="DeBruyn B."/>
            <person name="DeCaprio D."/>
            <person name="Eiglmeier K."/>
            <person name="Eisenstadt E."/>
            <person name="El-Dorry H."/>
            <person name="Gelbart W.M."/>
            <person name="Gomes S.L."/>
            <person name="Hammond M."/>
            <person name="Hannick L.I."/>
            <person name="Hogan J.R."/>
            <person name="Holmes M.H."/>
            <person name="Jaffe D."/>
            <person name="Johnston S.J."/>
            <person name="Kennedy R.C."/>
            <person name="Koo H."/>
            <person name="Kravitz S."/>
            <person name="Kriventseva E.V."/>
            <person name="Kulp D."/>
            <person name="Labutti K."/>
            <person name="Lee E."/>
            <person name="Li S."/>
            <person name="Lovin D.D."/>
            <person name="Mao C."/>
            <person name="Mauceli E."/>
            <person name="Menck C.F."/>
            <person name="Miller J.R."/>
            <person name="Montgomery P."/>
            <person name="Mori A."/>
            <person name="Nascimento A.L."/>
            <person name="Naveira H.F."/>
            <person name="Nusbaum C."/>
            <person name="O'Leary S.B."/>
            <person name="Orvis J."/>
            <person name="Pertea M."/>
            <person name="Quesneville H."/>
            <person name="Reidenbach K.R."/>
            <person name="Rogers Y.-H.C."/>
            <person name="Roth C.W."/>
            <person name="Schneider J.R."/>
            <person name="Schatz M."/>
            <person name="Shumway M."/>
            <person name="Stanke M."/>
            <person name="Stinson E.O."/>
            <person name="Tubio J.M.C."/>
            <person name="Vanzee J.P."/>
            <person name="Verjovski-Almeida S."/>
            <person name="Werner D."/>
            <person name="White O.R."/>
            <person name="Wyder S."/>
            <person name="Zeng Q."/>
            <person name="Zhao Q."/>
            <person name="Zhao Y."/>
            <person name="Hill C.A."/>
            <person name="Raikhel A.S."/>
            <person name="Soares M.B."/>
            <person name="Knudson D.L."/>
            <person name="Lee N.H."/>
            <person name="Galagan J."/>
            <person name="Salzberg S.L."/>
            <person name="Paulsen I.T."/>
            <person name="Dimopoulos G."/>
            <person name="Collins F.H."/>
            <person name="Bruce B."/>
            <person name="Fraser-Liggett C.M."/>
            <person name="Severson D.W."/>
        </authorList>
    </citation>
    <scope>NUCLEOTIDE SEQUENCE [LARGE SCALE GENOMIC DNA]</scope>
    <source>
        <strain>LVPib12</strain>
    </source>
</reference>
<keyword id="KW-0256">Endoplasmic reticulum</keyword>
<keyword id="KW-0325">Glycoprotein</keyword>
<keyword id="KW-0328">Glycosyltransferase</keyword>
<keyword id="KW-1185">Reference proteome</keyword>
<keyword id="KW-0732">Signal</keyword>
<keyword id="KW-0808">Transferase</keyword>
<proteinExistence type="inferred from homology"/>
<evidence type="ECO:0000255" key="1"/>
<evidence type="ECO:0000256" key="2">
    <source>
        <dbReference type="SAM" id="MobiDB-lite"/>
    </source>
</evidence>
<evidence type="ECO:0000305" key="3"/>
<feature type="signal peptide" evidence="1">
    <location>
        <begin position="1"/>
        <end position="22"/>
    </location>
</feature>
<feature type="chain" id="PRO_0000309547" description="Glycosyltransferase 25 family member">
    <location>
        <begin position="23"/>
        <end position="607"/>
    </location>
</feature>
<feature type="region of interest" description="Disordered" evidence="2">
    <location>
        <begin position="566"/>
        <end position="607"/>
    </location>
</feature>
<feature type="short sequence motif" description="Prevents secretion from ER" evidence="1">
    <location>
        <begin position="604"/>
        <end position="607"/>
    </location>
</feature>
<feature type="compositionally biased region" description="Basic and acidic residues" evidence="2">
    <location>
        <begin position="571"/>
        <end position="581"/>
    </location>
</feature>
<feature type="compositionally biased region" description="Basic and acidic residues" evidence="2">
    <location>
        <begin position="591"/>
        <end position="607"/>
    </location>
</feature>
<feature type="glycosylation site" description="N-linked (GlcNAc...) asparagine" evidence="1">
    <location>
        <position position="226"/>
    </location>
</feature>
<feature type="glycosylation site" description="N-linked (GlcNAc...) asparagine" evidence="1">
    <location>
        <position position="254"/>
    </location>
</feature>
<feature type="glycosylation site" description="N-linked (GlcNAc...) asparagine" evidence="1">
    <location>
        <position position="514"/>
    </location>
</feature>
<feature type="glycosylation site" description="N-linked (GlcNAc...) asparagine" evidence="1">
    <location>
        <position position="565"/>
    </location>
</feature>
<organism>
    <name type="scientific">Aedes aegypti</name>
    <name type="common">Yellowfever mosquito</name>
    <name type="synonym">Culex aegypti</name>
    <dbReference type="NCBI Taxonomy" id="7159"/>
    <lineage>
        <taxon>Eukaryota</taxon>
        <taxon>Metazoa</taxon>
        <taxon>Ecdysozoa</taxon>
        <taxon>Arthropoda</taxon>
        <taxon>Hexapoda</taxon>
        <taxon>Insecta</taxon>
        <taxon>Pterygota</taxon>
        <taxon>Neoptera</taxon>
        <taxon>Endopterygota</taxon>
        <taxon>Diptera</taxon>
        <taxon>Nematocera</taxon>
        <taxon>Culicoidea</taxon>
        <taxon>Culicidae</taxon>
        <taxon>Culicinae</taxon>
        <taxon>Aedini</taxon>
        <taxon>Aedes</taxon>
        <taxon>Stegomyia</taxon>
    </lineage>
</organism>
<name>GLT25_AEDAE</name>
<gene>
    <name type="ORF">AAEL003481</name>
</gene>
<comment type="subcellular location">
    <subcellularLocation>
        <location evidence="3">Endoplasmic reticulum lumen</location>
    </subcellularLocation>
</comment>
<comment type="similarity">
    <text evidence="3">Belongs to the glycosyltransferase 25 family.</text>
</comment>
<protein>
    <recommendedName>
        <fullName>Glycosyltransferase 25 family member</fullName>
        <ecNumber>2.-.-.-</ecNumber>
    </recommendedName>
</protein>